<reference key="1">
    <citation type="journal article" date="2005" name="Nature">
        <title>Genome sequencing and analysis of Aspergillus oryzae.</title>
        <authorList>
            <person name="Machida M."/>
            <person name="Asai K."/>
            <person name="Sano M."/>
            <person name="Tanaka T."/>
            <person name="Kumagai T."/>
            <person name="Terai G."/>
            <person name="Kusumoto K."/>
            <person name="Arima T."/>
            <person name="Akita O."/>
            <person name="Kashiwagi Y."/>
            <person name="Abe K."/>
            <person name="Gomi K."/>
            <person name="Horiuchi H."/>
            <person name="Kitamoto K."/>
            <person name="Kobayashi T."/>
            <person name="Takeuchi M."/>
            <person name="Denning D.W."/>
            <person name="Galagan J.E."/>
            <person name="Nierman W.C."/>
            <person name="Yu J."/>
            <person name="Archer D.B."/>
            <person name="Bennett J.W."/>
            <person name="Bhatnagar D."/>
            <person name="Cleveland T.E."/>
            <person name="Fedorova N.D."/>
            <person name="Gotoh O."/>
            <person name="Horikawa H."/>
            <person name="Hosoyama A."/>
            <person name="Ichinomiya M."/>
            <person name="Igarashi R."/>
            <person name="Iwashita K."/>
            <person name="Juvvadi P.R."/>
            <person name="Kato M."/>
            <person name="Kato Y."/>
            <person name="Kin T."/>
            <person name="Kokubun A."/>
            <person name="Maeda H."/>
            <person name="Maeyama N."/>
            <person name="Maruyama J."/>
            <person name="Nagasaki H."/>
            <person name="Nakajima T."/>
            <person name="Oda K."/>
            <person name="Okada K."/>
            <person name="Paulsen I."/>
            <person name="Sakamoto K."/>
            <person name="Sawano T."/>
            <person name="Takahashi M."/>
            <person name="Takase K."/>
            <person name="Terabayashi Y."/>
            <person name="Wortman J.R."/>
            <person name="Yamada O."/>
            <person name="Yamagata Y."/>
            <person name="Anazawa H."/>
            <person name="Hata Y."/>
            <person name="Koide Y."/>
            <person name="Komori T."/>
            <person name="Koyama Y."/>
            <person name="Minetoki T."/>
            <person name="Suharnan S."/>
            <person name="Tanaka A."/>
            <person name="Isono K."/>
            <person name="Kuhara S."/>
            <person name="Ogasawara N."/>
            <person name="Kikuchi H."/>
        </authorList>
    </citation>
    <scope>NUCLEOTIDE SEQUENCE [LARGE SCALE GENOMIC DNA]</scope>
    <source>
        <strain>ATCC 42149 / RIB 40</strain>
    </source>
</reference>
<organism>
    <name type="scientific">Aspergillus oryzae (strain ATCC 42149 / RIB 40)</name>
    <name type="common">Yellow koji mold</name>
    <dbReference type="NCBI Taxonomy" id="510516"/>
    <lineage>
        <taxon>Eukaryota</taxon>
        <taxon>Fungi</taxon>
        <taxon>Dikarya</taxon>
        <taxon>Ascomycota</taxon>
        <taxon>Pezizomycotina</taxon>
        <taxon>Eurotiomycetes</taxon>
        <taxon>Eurotiomycetidae</taxon>
        <taxon>Eurotiales</taxon>
        <taxon>Aspergillaceae</taxon>
        <taxon>Aspergillus</taxon>
        <taxon>Aspergillus subgen. Circumdati</taxon>
    </lineage>
</organism>
<sequence>MPLICIVYFLQYLDKIAISYASVTGLRESANLHGNQFNWVSTSTESIFPDCSTGPLSKNNVCDTSLDPVSRAKSLVAAMTLEEKINNTKYDSSGAPRLGLPAYNWWNEALHGVAEGHGVSFSDSGNFSYATSFPMPILLGAAFDDDLVKQVATVISTEARAFANGGHAGLDYWTPNINPFRDPRWGRGQETPGEDPLHLSRYVYHLVDGLQDGIGPERPKVVATCKHFAAYDLENWEGIERYAFDAVVSPQDLSEYYLPSFKTCTRDAKVDAVMCSYNSLNGIPTCADRWLLQTLLREHWGWEQTGHWVTGDCGAIDNIYADHHYVADGAHAAAAALNAGTDLDCGSVFPEYLGSALQQGLYNNQTLNNALIRLYSSLVKLGYFDPADDQPYRSIGWNEVFTPAAEELAHKATVEGIVMLKNDGTLPLKSNGTVAIIGPFANATTQLQGNYEGPPKYIRTLIWAAVHNGYKVKFSQGTDINSNSSAGFAEAISAAKEADTVIYAGGIDNTIEKESQDRTTIVWPGNQLDLIEQLSDLEKPLIVVQFGGGQVDDSSLLANAGVGALLWAGYPSQAGGAAVFDILTGKSAPAGRLPVTQYPASYVDEVPMTDMTLRPGSNNPGRTYRWYDKAVLPFGFGLHYTTFNVSWNHAEYGPYNTDSVASGTTNAPVDTELFDTFSITVTNTGNVASDYIALLFLTADGVGPEPYPIKTLVGYSRAKGIEPGQSQQVKLDVSVGSVARTAENGDLVLYPGSYKLEVDVGQDFPTATFTVSGKEKVLDEFPEPQQNATSAVTRRGR</sequence>
<protein>
    <recommendedName>
        <fullName>Probable exo-1,4-beta-xylosidase bxlB</fullName>
        <ecNumber>3.2.1.37</ecNumber>
    </recommendedName>
    <alternativeName>
        <fullName>1,4-beta-D-xylan xylohydrolase bxlB</fullName>
    </alternativeName>
    <alternativeName>
        <fullName>Beta-xylosidase bxlB</fullName>
    </alternativeName>
    <alternativeName>
        <fullName>Xylobiase bxlB</fullName>
    </alternativeName>
</protein>
<feature type="signal peptide" evidence="2">
    <location>
        <begin position="1"/>
        <end position="21"/>
    </location>
</feature>
<feature type="chain" id="PRO_0000394089" description="Probable exo-1,4-beta-xylosidase bxlB">
    <location>
        <begin position="22"/>
        <end position="797"/>
    </location>
</feature>
<feature type="active site" evidence="1">
    <location>
        <position position="312"/>
    </location>
</feature>
<feature type="glycosylation site" description="N-linked (GlcNAc...) asparagine" evidence="2">
    <location>
        <position position="86"/>
    </location>
</feature>
<feature type="glycosylation site" description="N-linked (GlcNAc...) asparagine" evidence="2">
    <location>
        <position position="126"/>
    </location>
</feature>
<feature type="glycosylation site" description="N-linked (GlcNAc...) asparagine" evidence="2">
    <location>
        <position position="364"/>
    </location>
</feature>
<feature type="glycosylation site" description="N-linked (GlcNAc...) asparagine" evidence="2">
    <location>
        <position position="431"/>
    </location>
</feature>
<feature type="glycosylation site" description="N-linked (GlcNAc...) asparagine" evidence="2">
    <location>
        <position position="442"/>
    </location>
</feature>
<feature type="glycosylation site" description="N-linked (GlcNAc...) asparagine" evidence="2">
    <location>
        <position position="483"/>
    </location>
</feature>
<feature type="glycosylation site" description="N-linked (GlcNAc...) asparagine" evidence="2">
    <location>
        <position position="644"/>
    </location>
</feature>
<feature type="glycosylation site" description="N-linked (GlcNAc...) asparagine" evidence="2">
    <location>
        <position position="787"/>
    </location>
</feature>
<accession>Q2TYT2</accession>
<name>BXLB_ASPOR</name>
<evidence type="ECO:0000250" key="1"/>
<evidence type="ECO:0000255" key="2"/>
<evidence type="ECO:0000305" key="3"/>
<proteinExistence type="inferred from homology"/>
<comment type="function">
    <text evidence="1">Xylan 1,4-beta-xylosidase involved in the hydrolysis of xylan, a major structural heterogeneous polysaccharide found in plant biomass representing the second most abundant polysaccharide in the biosphere, after cellulose.</text>
</comment>
<comment type="catalytic activity">
    <reaction>
        <text>Hydrolysis of (1-&gt;4)-beta-D-xylans, to remove successive D-xylose residues from the non-reducing termini.</text>
        <dbReference type="EC" id="3.2.1.37"/>
    </reaction>
</comment>
<comment type="pathway">
    <text>Glycan degradation; xylan degradation.</text>
</comment>
<comment type="subcellular location">
    <subcellularLocation>
        <location evidence="1">Secreted</location>
    </subcellularLocation>
</comment>
<comment type="similarity">
    <text evidence="3">Belongs to the glycosyl hydrolase 3 family.</text>
</comment>
<keyword id="KW-0119">Carbohydrate metabolism</keyword>
<keyword id="KW-0325">Glycoprotein</keyword>
<keyword id="KW-0326">Glycosidase</keyword>
<keyword id="KW-0378">Hydrolase</keyword>
<keyword id="KW-0624">Polysaccharide degradation</keyword>
<keyword id="KW-1185">Reference proteome</keyword>
<keyword id="KW-0964">Secreted</keyword>
<keyword id="KW-0732">Signal</keyword>
<keyword id="KW-0858">Xylan degradation</keyword>
<dbReference type="EC" id="3.2.1.37"/>
<dbReference type="EMBL" id="BA000056">
    <property type="protein sequence ID" value="BAE65591.1"/>
    <property type="molecule type" value="Genomic_DNA"/>
</dbReference>
<dbReference type="SMR" id="Q2TYT2"/>
<dbReference type="STRING" id="510516.Q2TYT2"/>
<dbReference type="CAZy" id="GH3">
    <property type="family name" value="Glycoside Hydrolase Family 3"/>
</dbReference>
<dbReference type="GlyCosmos" id="Q2TYT2">
    <property type="glycosylation" value="8 sites, No reported glycans"/>
</dbReference>
<dbReference type="EnsemblFungi" id="BAE65591">
    <property type="protein sequence ID" value="BAE65591"/>
    <property type="gene ID" value="AO090103000120"/>
</dbReference>
<dbReference type="VEuPathDB" id="FungiDB:AO090103000120"/>
<dbReference type="HOGENOM" id="CLU_004542_5_3_1"/>
<dbReference type="OMA" id="WGFKGHV"/>
<dbReference type="UniPathway" id="UPA00114"/>
<dbReference type="Proteomes" id="UP000006564">
    <property type="component" value="Chromosome 8"/>
</dbReference>
<dbReference type="GO" id="GO:0005576">
    <property type="term" value="C:extracellular region"/>
    <property type="evidence" value="ECO:0007669"/>
    <property type="project" value="UniProtKB-SubCell"/>
</dbReference>
<dbReference type="GO" id="GO:0046556">
    <property type="term" value="F:alpha-L-arabinofuranosidase activity"/>
    <property type="evidence" value="ECO:0007669"/>
    <property type="project" value="TreeGrafter"/>
</dbReference>
<dbReference type="GO" id="GO:0009044">
    <property type="term" value="F:xylan 1,4-beta-xylosidase activity"/>
    <property type="evidence" value="ECO:0007669"/>
    <property type="project" value="UniProtKB-EC"/>
</dbReference>
<dbReference type="GO" id="GO:0031222">
    <property type="term" value="P:arabinan catabolic process"/>
    <property type="evidence" value="ECO:0007669"/>
    <property type="project" value="TreeGrafter"/>
</dbReference>
<dbReference type="GO" id="GO:0045493">
    <property type="term" value="P:xylan catabolic process"/>
    <property type="evidence" value="ECO:0007669"/>
    <property type="project" value="UniProtKB-UniPathway"/>
</dbReference>
<dbReference type="FunFam" id="3.40.50.1700:FF:000007">
    <property type="entry name" value="Exo-1,4-beta-xylosidase xlnD"/>
    <property type="match status" value="1"/>
</dbReference>
<dbReference type="FunFam" id="3.20.20.300:FF:000013">
    <property type="entry name" value="Probable exo-1,4-beta-xylosidase xlnD"/>
    <property type="match status" value="1"/>
</dbReference>
<dbReference type="Gene3D" id="3.40.50.1700">
    <property type="entry name" value="Glycoside hydrolase family 3 C-terminal domain"/>
    <property type="match status" value="1"/>
</dbReference>
<dbReference type="Gene3D" id="3.20.20.300">
    <property type="entry name" value="Glycoside hydrolase, family 3, N-terminal domain"/>
    <property type="match status" value="1"/>
</dbReference>
<dbReference type="Gene3D" id="2.60.40.10">
    <property type="entry name" value="Immunoglobulins"/>
    <property type="match status" value="1"/>
</dbReference>
<dbReference type="InterPro" id="IPR044993">
    <property type="entry name" value="BXL"/>
</dbReference>
<dbReference type="InterPro" id="IPR026891">
    <property type="entry name" value="Fn3-like"/>
</dbReference>
<dbReference type="InterPro" id="IPR002772">
    <property type="entry name" value="Glyco_hydro_3_C"/>
</dbReference>
<dbReference type="InterPro" id="IPR036881">
    <property type="entry name" value="Glyco_hydro_3_C_sf"/>
</dbReference>
<dbReference type="InterPro" id="IPR001764">
    <property type="entry name" value="Glyco_hydro_3_N"/>
</dbReference>
<dbReference type="InterPro" id="IPR036962">
    <property type="entry name" value="Glyco_hydro_3_N_sf"/>
</dbReference>
<dbReference type="InterPro" id="IPR017853">
    <property type="entry name" value="Glycoside_hydrolase_SF"/>
</dbReference>
<dbReference type="InterPro" id="IPR013783">
    <property type="entry name" value="Ig-like_fold"/>
</dbReference>
<dbReference type="PANTHER" id="PTHR42721:SF3">
    <property type="entry name" value="BETA-D-XYLOSIDASE 5-RELATED"/>
    <property type="match status" value="1"/>
</dbReference>
<dbReference type="PANTHER" id="PTHR42721">
    <property type="entry name" value="SUGAR HYDROLASE-RELATED"/>
    <property type="match status" value="1"/>
</dbReference>
<dbReference type="Pfam" id="PF14310">
    <property type="entry name" value="Fn3-like"/>
    <property type="match status" value="1"/>
</dbReference>
<dbReference type="Pfam" id="PF00933">
    <property type="entry name" value="Glyco_hydro_3"/>
    <property type="match status" value="1"/>
</dbReference>
<dbReference type="Pfam" id="PF01915">
    <property type="entry name" value="Glyco_hydro_3_C"/>
    <property type="match status" value="1"/>
</dbReference>
<dbReference type="SMART" id="SM01217">
    <property type="entry name" value="Fn3_like"/>
    <property type="match status" value="1"/>
</dbReference>
<dbReference type="SUPFAM" id="SSF51445">
    <property type="entry name" value="(Trans)glycosidases"/>
    <property type="match status" value="1"/>
</dbReference>
<dbReference type="SUPFAM" id="SSF52279">
    <property type="entry name" value="Beta-D-glucan exohydrolase, C-terminal domain"/>
    <property type="match status" value="1"/>
</dbReference>
<gene>
    <name type="primary">bxlB</name>
    <name type="ORF">AO090103000120</name>
</gene>